<dbReference type="EC" id="2.7.1.48" evidence="1"/>
<dbReference type="EMBL" id="AM933172">
    <property type="protein sequence ID" value="CAR33701.1"/>
    <property type="molecule type" value="Genomic_DNA"/>
</dbReference>
<dbReference type="RefSeq" id="WP_000132082.1">
    <property type="nucleotide sequence ID" value="NC_011294.1"/>
</dbReference>
<dbReference type="SMR" id="B5R0B5"/>
<dbReference type="GeneID" id="66756602"/>
<dbReference type="KEGG" id="set:SEN2118"/>
<dbReference type="HOGENOM" id="CLU_021278_1_2_6"/>
<dbReference type="UniPathway" id="UPA00574">
    <property type="reaction ID" value="UER00637"/>
</dbReference>
<dbReference type="UniPathway" id="UPA00579">
    <property type="reaction ID" value="UER00640"/>
</dbReference>
<dbReference type="Proteomes" id="UP000000613">
    <property type="component" value="Chromosome"/>
</dbReference>
<dbReference type="GO" id="GO:0005737">
    <property type="term" value="C:cytoplasm"/>
    <property type="evidence" value="ECO:0007669"/>
    <property type="project" value="UniProtKB-SubCell"/>
</dbReference>
<dbReference type="GO" id="GO:0005524">
    <property type="term" value="F:ATP binding"/>
    <property type="evidence" value="ECO:0007669"/>
    <property type="project" value="UniProtKB-UniRule"/>
</dbReference>
<dbReference type="GO" id="GO:0043771">
    <property type="term" value="F:cytidine kinase activity"/>
    <property type="evidence" value="ECO:0007669"/>
    <property type="project" value="RHEA"/>
</dbReference>
<dbReference type="GO" id="GO:0004849">
    <property type="term" value="F:uridine kinase activity"/>
    <property type="evidence" value="ECO:0007669"/>
    <property type="project" value="UniProtKB-UniRule"/>
</dbReference>
<dbReference type="GO" id="GO:0044211">
    <property type="term" value="P:CTP salvage"/>
    <property type="evidence" value="ECO:0007669"/>
    <property type="project" value="UniProtKB-UniRule"/>
</dbReference>
<dbReference type="GO" id="GO:0044206">
    <property type="term" value="P:UMP salvage"/>
    <property type="evidence" value="ECO:0007669"/>
    <property type="project" value="UniProtKB-UniRule"/>
</dbReference>
<dbReference type="CDD" id="cd02023">
    <property type="entry name" value="UMPK"/>
    <property type="match status" value="1"/>
</dbReference>
<dbReference type="FunFam" id="3.40.50.300:FF:000252">
    <property type="entry name" value="Uridine kinase"/>
    <property type="match status" value="1"/>
</dbReference>
<dbReference type="Gene3D" id="3.40.50.300">
    <property type="entry name" value="P-loop containing nucleotide triphosphate hydrolases"/>
    <property type="match status" value="1"/>
</dbReference>
<dbReference type="HAMAP" id="MF_00551">
    <property type="entry name" value="Uridine_kinase"/>
    <property type="match status" value="1"/>
</dbReference>
<dbReference type="InterPro" id="IPR027417">
    <property type="entry name" value="P-loop_NTPase"/>
</dbReference>
<dbReference type="InterPro" id="IPR006083">
    <property type="entry name" value="PRK/URK"/>
</dbReference>
<dbReference type="InterPro" id="IPR026008">
    <property type="entry name" value="Uridine_kinase"/>
</dbReference>
<dbReference type="InterPro" id="IPR000764">
    <property type="entry name" value="Uridine_kinase-like"/>
</dbReference>
<dbReference type="NCBIfam" id="NF004018">
    <property type="entry name" value="PRK05480.1"/>
    <property type="match status" value="1"/>
</dbReference>
<dbReference type="NCBIfam" id="TIGR00235">
    <property type="entry name" value="udk"/>
    <property type="match status" value="1"/>
</dbReference>
<dbReference type="PANTHER" id="PTHR10285">
    <property type="entry name" value="URIDINE KINASE"/>
    <property type="match status" value="1"/>
</dbReference>
<dbReference type="Pfam" id="PF00485">
    <property type="entry name" value="PRK"/>
    <property type="match status" value="1"/>
</dbReference>
<dbReference type="PRINTS" id="PR00988">
    <property type="entry name" value="URIDINKINASE"/>
</dbReference>
<dbReference type="SUPFAM" id="SSF52540">
    <property type="entry name" value="P-loop containing nucleoside triphosphate hydrolases"/>
    <property type="match status" value="1"/>
</dbReference>
<feature type="chain" id="PRO_1000129083" description="Uridine kinase">
    <location>
        <begin position="1"/>
        <end position="213"/>
    </location>
</feature>
<feature type="binding site" evidence="1">
    <location>
        <begin position="15"/>
        <end position="22"/>
    </location>
    <ligand>
        <name>ATP</name>
        <dbReference type="ChEBI" id="CHEBI:30616"/>
    </ligand>
</feature>
<protein>
    <recommendedName>
        <fullName evidence="1">Uridine kinase</fullName>
        <ecNumber evidence="1">2.7.1.48</ecNumber>
    </recommendedName>
    <alternativeName>
        <fullName evidence="1">Cytidine monophosphokinase</fullName>
    </alternativeName>
    <alternativeName>
        <fullName evidence="1">Uridine monophosphokinase</fullName>
    </alternativeName>
</protein>
<gene>
    <name evidence="1" type="primary">udk</name>
    <name type="ordered locus">SEN2118</name>
</gene>
<evidence type="ECO:0000255" key="1">
    <source>
        <dbReference type="HAMAP-Rule" id="MF_00551"/>
    </source>
</evidence>
<proteinExistence type="inferred from homology"/>
<accession>B5R0B5</accession>
<keyword id="KW-0067">ATP-binding</keyword>
<keyword id="KW-0963">Cytoplasm</keyword>
<keyword id="KW-0418">Kinase</keyword>
<keyword id="KW-0547">Nucleotide-binding</keyword>
<keyword id="KW-0808">Transferase</keyword>
<sequence>MTDQSHQCVIIGIAGASASGKSLIASTLYRELREQVGDEHIGVIPEDSYYKDQSHLSMEERVKTNYDHPNAMDHSLLFQHLQALKRGSAIELPVYSYVEHTRMQETVRVEPKKVIILEGILLLTDARLREEMNFSIFVDTPLDICLMRRIKRDVNERGRSMDSVMAQYQKTVRPMFLQFIEPSKQYADIIVPRGGKNRIAIDILKAKISQFFE</sequence>
<name>URK_SALEP</name>
<organism>
    <name type="scientific">Salmonella enteritidis PT4 (strain P125109)</name>
    <dbReference type="NCBI Taxonomy" id="550537"/>
    <lineage>
        <taxon>Bacteria</taxon>
        <taxon>Pseudomonadati</taxon>
        <taxon>Pseudomonadota</taxon>
        <taxon>Gammaproteobacteria</taxon>
        <taxon>Enterobacterales</taxon>
        <taxon>Enterobacteriaceae</taxon>
        <taxon>Salmonella</taxon>
    </lineage>
</organism>
<comment type="catalytic activity">
    <reaction evidence="1">
        <text>uridine + ATP = UMP + ADP + H(+)</text>
        <dbReference type="Rhea" id="RHEA:16825"/>
        <dbReference type="ChEBI" id="CHEBI:15378"/>
        <dbReference type="ChEBI" id="CHEBI:16704"/>
        <dbReference type="ChEBI" id="CHEBI:30616"/>
        <dbReference type="ChEBI" id="CHEBI:57865"/>
        <dbReference type="ChEBI" id="CHEBI:456216"/>
        <dbReference type="EC" id="2.7.1.48"/>
    </reaction>
</comment>
<comment type="catalytic activity">
    <reaction evidence="1">
        <text>cytidine + ATP = CMP + ADP + H(+)</text>
        <dbReference type="Rhea" id="RHEA:24674"/>
        <dbReference type="ChEBI" id="CHEBI:15378"/>
        <dbReference type="ChEBI" id="CHEBI:17562"/>
        <dbReference type="ChEBI" id="CHEBI:30616"/>
        <dbReference type="ChEBI" id="CHEBI:60377"/>
        <dbReference type="ChEBI" id="CHEBI:456216"/>
        <dbReference type="EC" id="2.7.1.48"/>
    </reaction>
</comment>
<comment type="pathway">
    <text evidence="1">Pyrimidine metabolism; CTP biosynthesis via salvage pathway; CTP from cytidine: step 1/3.</text>
</comment>
<comment type="pathway">
    <text evidence="1">Pyrimidine metabolism; UMP biosynthesis via salvage pathway; UMP from uridine: step 1/1.</text>
</comment>
<comment type="subcellular location">
    <subcellularLocation>
        <location evidence="1">Cytoplasm</location>
    </subcellularLocation>
</comment>
<comment type="similarity">
    <text evidence="1">Belongs to the uridine kinase family.</text>
</comment>
<reference key="1">
    <citation type="journal article" date="2008" name="Genome Res.">
        <title>Comparative genome analysis of Salmonella enteritidis PT4 and Salmonella gallinarum 287/91 provides insights into evolutionary and host adaptation pathways.</title>
        <authorList>
            <person name="Thomson N.R."/>
            <person name="Clayton D.J."/>
            <person name="Windhorst D."/>
            <person name="Vernikos G."/>
            <person name="Davidson S."/>
            <person name="Churcher C."/>
            <person name="Quail M.A."/>
            <person name="Stevens M."/>
            <person name="Jones M.A."/>
            <person name="Watson M."/>
            <person name="Barron A."/>
            <person name="Layton A."/>
            <person name="Pickard D."/>
            <person name="Kingsley R.A."/>
            <person name="Bignell A."/>
            <person name="Clark L."/>
            <person name="Harris B."/>
            <person name="Ormond D."/>
            <person name="Abdellah Z."/>
            <person name="Brooks K."/>
            <person name="Cherevach I."/>
            <person name="Chillingworth T."/>
            <person name="Woodward J."/>
            <person name="Norberczak H."/>
            <person name="Lord A."/>
            <person name="Arrowsmith C."/>
            <person name="Jagels K."/>
            <person name="Moule S."/>
            <person name="Mungall K."/>
            <person name="Saunders M."/>
            <person name="Whitehead S."/>
            <person name="Chabalgoity J.A."/>
            <person name="Maskell D."/>
            <person name="Humphreys T."/>
            <person name="Roberts M."/>
            <person name="Barrow P.A."/>
            <person name="Dougan G."/>
            <person name="Parkhill J."/>
        </authorList>
    </citation>
    <scope>NUCLEOTIDE SEQUENCE [LARGE SCALE GENOMIC DNA]</scope>
    <source>
        <strain>P125109</strain>
    </source>
</reference>